<accession>Q9HYR9</accession>
<name>CLPP2_PSEAE</name>
<sequence length="201" mass="22142">MKTDDKDREGGDSHGAIGAKLMEYALKVRKVFVTGGVDEKMAKDVVQQLHILASISDDPIYMFVNSPGGHVESGDMIFDAIRFITPKVIMIGSGSVASAGALIYAAADKENRYSLPNTRFLLHQPSGGIQGPASNIEIYRREIVRMKERLDRIFAEATGQTPEKISADTERDFWLNAEEAVQYGLVNKIIVSEREITLPGQ</sequence>
<proteinExistence type="evidence at protein level"/>
<gene>
    <name evidence="1" type="primary">clpP2</name>
    <name type="ordered locus">PA3326</name>
</gene>
<comment type="function">
    <text evidence="1">Cleaves peptides in various proteins in a process that requires ATP hydrolysis. Has a chymotrypsin-like activity. Plays a major role in the degradation of misfolded proteins.</text>
</comment>
<comment type="catalytic activity">
    <reaction evidence="1">
        <text>Hydrolysis of proteins to small peptides in the presence of ATP and magnesium. alpha-casein is the usual test substrate. In the absence of ATP, only oligopeptides shorter than five residues are hydrolyzed (such as succinyl-Leu-Tyr-|-NHMec, and Leu-Tyr-Leu-|-Tyr-Trp, in which cleavage of the -Tyr-|-Leu- and -Tyr-|-Trp bonds also occurs).</text>
        <dbReference type="EC" id="3.4.21.92"/>
    </reaction>
</comment>
<comment type="subunit">
    <text evidence="1">Fourteen ClpP subunits assemble into 2 heptameric rings which stack back to back to give a disk-like structure with a central cavity, resembling the structure of eukaryotic proteasomes.</text>
</comment>
<comment type="subcellular location">
    <subcellularLocation>
        <location evidence="1">Cytoplasm</location>
    </subcellularLocation>
</comment>
<comment type="similarity">
    <text evidence="1">Belongs to the peptidase S14 family.</text>
</comment>
<evidence type="ECO:0000255" key="1">
    <source>
        <dbReference type="HAMAP-Rule" id="MF_00444"/>
    </source>
</evidence>
<evidence type="ECO:0007829" key="2">
    <source>
        <dbReference type="PDB" id="7M1L"/>
    </source>
</evidence>
<dbReference type="EC" id="3.4.21.92" evidence="1"/>
<dbReference type="EMBL" id="AE004091">
    <property type="protein sequence ID" value="AAG06714.1"/>
    <property type="molecule type" value="Genomic_DNA"/>
</dbReference>
<dbReference type="PIR" id="B83229">
    <property type="entry name" value="B83229"/>
</dbReference>
<dbReference type="RefSeq" id="NP_252016.1">
    <property type="nucleotide sequence ID" value="NC_002516.2"/>
</dbReference>
<dbReference type="RefSeq" id="WP_003091706.1">
    <property type="nucleotide sequence ID" value="NZ_QZGE01000017.1"/>
</dbReference>
<dbReference type="PDB" id="7M1L">
    <property type="method" value="X-ray"/>
    <property type="resolution" value="2.00 A"/>
    <property type="chains" value="A/B/C/D/E/F/G=1-201"/>
</dbReference>
<dbReference type="PDBsum" id="7M1L"/>
<dbReference type="SMR" id="Q9HYR9"/>
<dbReference type="STRING" id="208964.PA3326"/>
<dbReference type="PaxDb" id="208964-PA3326"/>
<dbReference type="GeneID" id="882491"/>
<dbReference type="KEGG" id="pae:PA3326"/>
<dbReference type="PATRIC" id="fig|208964.12.peg.3484"/>
<dbReference type="PseudoCAP" id="PA3326"/>
<dbReference type="HOGENOM" id="CLU_058707_4_0_6"/>
<dbReference type="InParanoid" id="Q9HYR9"/>
<dbReference type="OrthoDB" id="9802800at2"/>
<dbReference type="PhylomeDB" id="Q9HYR9"/>
<dbReference type="BioCyc" id="PAER208964:G1FZ6-3390-MONOMER"/>
<dbReference type="Proteomes" id="UP000002438">
    <property type="component" value="Chromosome"/>
</dbReference>
<dbReference type="GO" id="GO:0005737">
    <property type="term" value="C:cytoplasm"/>
    <property type="evidence" value="ECO:0007669"/>
    <property type="project" value="UniProtKB-SubCell"/>
</dbReference>
<dbReference type="GO" id="GO:0009368">
    <property type="term" value="C:endopeptidase Clp complex"/>
    <property type="evidence" value="ECO:0000318"/>
    <property type="project" value="GO_Central"/>
</dbReference>
<dbReference type="GO" id="GO:0004176">
    <property type="term" value="F:ATP-dependent peptidase activity"/>
    <property type="evidence" value="ECO:0000318"/>
    <property type="project" value="GO_Central"/>
</dbReference>
<dbReference type="GO" id="GO:0051117">
    <property type="term" value="F:ATPase binding"/>
    <property type="evidence" value="ECO:0000318"/>
    <property type="project" value="GO_Central"/>
</dbReference>
<dbReference type="GO" id="GO:0004252">
    <property type="term" value="F:serine-type endopeptidase activity"/>
    <property type="evidence" value="ECO:0000318"/>
    <property type="project" value="GO_Central"/>
</dbReference>
<dbReference type="GO" id="GO:0006515">
    <property type="term" value="P:protein quality control for misfolded or incompletely synthesized proteins"/>
    <property type="evidence" value="ECO:0000318"/>
    <property type="project" value="GO_Central"/>
</dbReference>
<dbReference type="CDD" id="cd07017">
    <property type="entry name" value="S14_ClpP_2"/>
    <property type="match status" value="1"/>
</dbReference>
<dbReference type="Gene3D" id="3.90.226.10">
    <property type="entry name" value="2-enoyl-CoA Hydratase, Chain A, domain 1"/>
    <property type="match status" value="1"/>
</dbReference>
<dbReference type="HAMAP" id="MF_00444">
    <property type="entry name" value="ClpP"/>
    <property type="match status" value="1"/>
</dbReference>
<dbReference type="InterPro" id="IPR001907">
    <property type="entry name" value="ClpP"/>
</dbReference>
<dbReference type="InterPro" id="IPR029045">
    <property type="entry name" value="ClpP/crotonase-like_dom_sf"/>
</dbReference>
<dbReference type="InterPro" id="IPR023562">
    <property type="entry name" value="ClpP/TepA"/>
</dbReference>
<dbReference type="InterPro" id="IPR033135">
    <property type="entry name" value="ClpP_His_AS"/>
</dbReference>
<dbReference type="NCBIfam" id="NF009205">
    <property type="entry name" value="PRK12553.1"/>
    <property type="match status" value="1"/>
</dbReference>
<dbReference type="PANTHER" id="PTHR10381">
    <property type="entry name" value="ATP-DEPENDENT CLP PROTEASE PROTEOLYTIC SUBUNIT"/>
    <property type="match status" value="1"/>
</dbReference>
<dbReference type="PANTHER" id="PTHR10381:SF70">
    <property type="entry name" value="ATP-DEPENDENT CLP PROTEASE PROTEOLYTIC SUBUNIT"/>
    <property type="match status" value="1"/>
</dbReference>
<dbReference type="Pfam" id="PF00574">
    <property type="entry name" value="CLP_protease"/>
    <property type="match status" value="1"/>
</dbReference>
<dbReference type="PRINTS" id="PR00127">
    <property type="entry name" value="CLPPROTEASEP"/>
</dbReference>
<dbReference type="SUPFAM" id="SSF52096">
    <property type="entry name" value="ClpP/crotonase"/>
    <property type="match status" value="1"/>
</dbReference>
<dbReference type="PROSITE" id="PS00382">
    <property type="entry name" value="CLP_PROTEASE_HIS"/>
    <property type="match status" value="1"/>
</dbReference>
<feature type="chain" id="PRO_0000179627" description="ATP-dependent Clp protease proteolytic subunit 2">
    <location>
        <begin position="1"/>
        <end position="201"/>
    </location>
</feature>
<feature type="active site" description="Nucleophile" evidence="1">
    <location>
        <position position="98"/>
    </location>
</feature>
<feature type="active site" evidence="1">
    <location>
        <position position="123"/>
    </location>
</feature>
<feature type="helix" evidence="2">
    <location>
        <begin position="15"/>
        <end position="27"/>
    </location>
</feature>
<feature type="strand" evidence="2">
    <location>
        <begin position="30"/>
        <end position="35"/>
    </location>
</feature>
<feature type="helix" evidence="2">
    <location>
        <begin position="39"/>
        <end position="55"/>
    </location>
</feature>
<feature type="strand" evidence="2">
    <location>
        <begin position="60"/>
        <end position="66"/>
    </location>
</feature>
<feature type="helix" evidence="2">
    <location>
        <begin position="71"/>
        <end position="83"/>
    </location>
</feature>
<feature type="strand" evidence="2">
    <location>
        <begin position="84"/>
        <end position="86"/>
    </location>
</feature>
<feature type="strand" evidence="2">
    <location>
        <begin position="88"/>
        <end position="97"/>
    </location>
</feature>
<feature type="helix" evidence="2">
    <location>
        <begin position="99"/>
        <end position="105"/>
    </location>
</feature>
<feature type="helix" evidence="2">
    <location>
        <begin position="109"/>
        <end position="111"/>
    </location>
</feature>
<feature type="strand" evidence="2">
    <location>
        <begin position="112"/>
        <end position="114"/>
    </location>
</feature>
<feature type="strand" evidence="2">
    <location>
        <begin position="119"/>
        <end position="122"/>
    </location>
</feature>
<feature type="helix" evidence="2">
    <location>
        <begin position="133"/>
        <end position="158"/>
    </location>
</feature>
<feature type="helix" evidence="2">
    <location>
        <begin position="162"/>
        <end position="168"/>
    </location>
</feature>
<feature type="strand" evidence="2">
    <location>
        <begin position="173"/>
        <end position="176"/>
    </location>
</feature>
<feature type="helix" evidence="2">
    <location>
        <begin position="177"/>
        <end position="182"/>
    </location>
</feature>
<feature type="strand" evidence="2">
    <location>
        <begin position="187"/>
        <end position="189"/>
    </location>
</feature>
<feature type="helix" evidence="2">
    <location>
        <begin position="193"/>
        <end position="195"/>
    </location>
</feature>
<organism>
    <name type="scientific">Pseudomonas aeruginosa (strain ATCC 15692 / DSM 22644 / CIP 104116 / JCM 14847 / LMG 12228 / 1C / PRS 101 / PAO1)</name>
    <dbReference type="NCBI Taxonomy" id="208964"/>
    <lineage>
        <taxon>Bacteria</taxon>
        <taxon>Pseudomonadati</taxon>
        <taxon>Pseudomonadota</taxon>
        <taxon>Gammaproteobacteria</taxon>
        <taxon>Pseudomonadales</taxon>
        <taxon>Pseudomonadaceae</taxon>
        <taxon>Pseudomonas</taxon>
    </lineage>
</organism>
<keyword id="KW-0002">3D-structure</keyword>
<keyword id="KW-0963">Cytoplasm</keyword>
<keyword id="KW-0378">Hydrolase</keyword>
<keyword id="KW-0645">Protease</keyword>
<keyword id="KW-1185">Reference proteome</keyword>
<keyword id="KW-0720">Serine protease</keyword>
<reference key="1">
    <citation type="journal article" date="2000" name="Nature">
        <title>Complete genome sequence of Pseudomonas aeruginosa PAO1, an opportunistic pathogen.</title>
        <authorList>
            <person name="Stover C.K."/>
            <person name="Pham X.-Q.T."/>
            <person name="Erwin A.L."/>
            <person name="Mizoguchi S.D."/>
            <person name="Warrener P."/>
            <person name="Hickey M.J."/>
            <person name="Brinkman F.S.L."/>
            <person name="Hufnagle W.O."/>
            <person name="Kowalik D.J."/>
            <person name="Lagrou M."/>
            <person name="Garber R.L."/>
            <person name="Goltry L."/>
            <person name="Tolentino E."/>
            <person name="Westbrock-Wadman S."/>
            <person name="Yuan Y."/>
            <person name="Brody L.L."/>
            <person name="Coulter S.N."/>
            <person name="Folger K.R."/>
            <person name="Kas A."/>
            <person name="Larbig K."/>
            <person name="Lim R.M."/>
            <person name="Smith K.A."/>
            <person name="Spencer D.H."/>
            <person name="Wong G.K.-S."/>
            <person name="Wu Z."/>
            <person name="Paulsen I.T."/>
            <person name="Reizer J."/>
            <person name="Saier M.H. Jr."/>
            <person name="Hancock R.E.W."/>
            <person name="Lory S."/>
            <person name="Olson M.V."/>
        </authorList>
    </citation>
    <scope>NUCLEOTIDE SEQUENCE [LARGE SCALE GENOMIC DNA]</scope>
    <source>
        <strain>ATCC 15692 / DSM 22644 / CIP 104116 / JCM 14847 / LMG 12228 / 1C / PRS 101 / PAO1</strain>
    </source>
</reference>
<protein>
    <recommendedName>
        <fullName evidence="1">ATP-dependent Clp protease proteolytic subunit 2</fullName>
        <ecNumber evidence="1">3.4.21.92</ecNumber>
    </recommendedName>
    <alternativeName>
        <fullName evidence="1">Endopeptidase Clp 2</fullName>
    </alternativeName>
</protein>